<proteinExistence type="evidence at protein level"/>
<protein>
    <recommendedName>
        <fullName evidence="1">Oil body-associated protein 2C</fullName>
    </recommendedName>
</protein>
<name>OBP2C_ARATH</name>
<accession>Q9C7N3</accession>
<comment type="interaction">
    <interactant intactId="EBI-4425345">
        <id>Q9C7N3</id>
    </interactant>
    <interactant intactId="EBI-4425363">
        <id>Q8GWR2</id>
        <label>OBAP1B</label>
    </interactant>
    <organismsDiffer>false</organismsDiffer>
    <experiments>4</experiments>
</comment>
<comment type="similarity">
    <text evidence="2">Belongs to the OBAP family.</text>
</comment>
<gene>
    <name evidence="1" type="primary">OBAP2C</name>
    <name evidence="3" type="ordered locus">At1g29680</name>
    <name evidence="4" type="ORF">F15D2.23</name>
</gene>
<feature type="chain" id="PRO_0000436090" description="Oil body-associated protein 2C">
    <location>
        <begin position="1"/>
        <end position="237"/>
    </location>
</feature>
<sequence length="237" mass="26876">MALSGGDDQVPPGGPMTVSTRLIDAGSTIMQRRLPVKQMNTHVSTFAIYGGDMSRLIGTHHYVHRVNDEFLQCAVYASDRSDAPLIGIEYVISDRLYETLSEDEQKLWHSHAYEVKSGSWAYPRLPEVVAAPELKNIAKTYGKFWCTWQIDRGDKLPMGAPELMMSPQGVGQGVLRPELVKRRDEKYNISTDDLKHTRAEIAEPEWINPMADYWKQHGKCFVLDIATVEMNRHAQFP</sequence>
<organism>
    <name type="scientific">Arabidopsis thaliana</name>
    <name type="common">Mouse-ear cress</name>
    <dbReference type="NCBI Taxonomy" id="3702"/>
    <lineage>
        <taxon>Eukaryota</taxon>
        <taxon>Viridiplantae</taxon>
        <taxon>Streptophyta</taxon>
        <taxon>Embryophyta</taxon>
        <taxon>Tracheophyta</taxon>
        <taxon>Spermatophyta</taxon>
        <taxon>Magnoliopsida</taxon>
        <taxon>eudicotyledons</taxon>
        <taxon>Gunneridae</taxon>
        <taxon>Pentapetalae</taxon>
        <taxon>rosids</taxon>
        <taxon>malvids</taxon>
        <taxon>Brassicales</taxon>
        <taxon>Brassicaceae</taxon>
        <taxon>Camelineae</taxon>
        <taxon>Arabidopsis</taxon>
    </lineage>
</organism>
<evidence type="ECO:0000303" key="1">
    <source>
    </source>
</evidence>
<evidence type="ECO:0000305" key="2"/>
<evidence type="ECO:0000312" key="3">
    <source>
        <dbReference type="Araport" id="AT1G29680"/>
    </source>
</evidence>
<evidence type="ECO:0000312" key="4">
    <source>
        <dbReference type="EMBL" id="BAC42637.1"/>
    </source>
</evidence>
<dbReference type="EMBL" id="AC068667">
    <property type="protein sequence ID" value="AAG51759.1"/>
    <property type="molecule type" value="Genomic_DNA"/>
</dbReference>
<dbReference type="EMBL" id="CP002684">
    <property type="protein sequence ID" value="AEE31117.1"/>
    <property type="molecule type" value="Genomic_DNA"/>
</dbReference>
<dbReference type="EMBL" id="AK118004">
    <property type="protein sequence ID" value="BAC42637.1"/>
    <property type="molecule type" value="mRNA"/>
</dbReference>
<dbReference type="EMBL" id="BT005255">
    <property type="protein sequence ID" value="AAO63319.1"/>
    <property type="molecule type" value="mRNA"/>
</dbReference>
<dbReference type="PIR" id="B86420">
    <property type="entry name" value="B86420"/>
</dbReference>
<dbReference type="RefSeq" id="NP_174261.1">
    <property type="nucleotide sequence ID" value="NM_102708.3"/>
</dbReference>
<dbReference type="FunCoup" id="Q9C7N3">
    <property type="interactions" value="24"/>
</dbReference>
<dbReference type="IntAct" id="Q9C7N3">
    <property type="interactions" value="3"/>
</dbReference>
<dbReference type="STRING" id="3702.Q9C7N3"/>
<dbReference type="PaxDb" id="3702-AT1G29680.1"/>
<dbReference type="ProteomicsDB" id="238992"/>
<dbReference type="DNASU" id="839845"/>
<dbReference type="EnsemblPlants" id="AT1G29680.1">
    <property type="protein sequence ID" value="AT1G29680.1"/>
    <property type="gene ID" value="AT1G29680"/>
</dbReference>
<dbReference type="GeneID" id="839845"/>
<dbReference type="Gramene" id="AT1G29680.1">
    <property type="protein sequence ID" value="AT1G29680.1"/>
    <property type="gene ID" value="AT1G29680"/>
</dbReference>
<dbReference type="KEGG" id="ath:AT1G29680"/>
<dbReference type="Araport" id="AT1G29680"/>
<dbReference type="TAIR" id="AT1G29680"/>
<dbReference type="eggNOG" id="ENOG502QPUT">
    <property type="taxonomic scope" value="Eukaryota"/>
</dbReference>
<dbReference type="HOGENOM" id="CLU_071931_2_1_1"/>
<dbReference type="InParanoid" id="Q9C7N3"/>
<dbReference type="OMA" id="CTWQADR"/>
<dbReference type="OrthoDB" id="1901244at2759"/>
<dbReference type="PhylomeDB" id="Q9C7N3"/>
<dbReference type="PRO" id="PR:Q9C7N3"/>
<dbReference type="Proteomes" id="UP000006548">
    <property type="component" value="Chromosome 1"/>
</dbReference>
<dbReference type="ExpressionAtlas" id="Q9C7N3">
    <property type="expression patterns" value="baseline and differential"/>
</dbReference>
<dbReference type="InterPro" id="IPR010686">
    <property type="entry name" value="OBAP-like"/>
</dbReference>
<dbReference type="PANTHER" id="PTHR31360">
    <property type="match status" value="1"/>
</dbReference>
<dbReference type="PANTHER" id="PTHR31360:SF11">
    <property type="entry name" value="OIL BODY-ASSOCIATED PROTEIN 2C"/>
    <property type="match status" value="1"/>
</dbReference>
<dbReference type="Pfam" id="PF06884">
    <property type="entry name" value="DUF1264"/>
    <property type="match status" value="1"/>
</dbReference>
<keyword id="KW-1185">Reference proteome</keyword>
<reference key="1">
    <citation type="journal article" date="2000" name="Nature">
        <title>Sequence and analysis of chromosome 1 of the plant Arabidopsis thaliana.</title>
        <authorList>
            <person name="Theologis A."/>
            <person name="Ecker J.R."/>
            <person name="Palm C.J."/>
            <person name="Federspiel N.A."/>
            <person name="Kaul S."/>
            <person name="White O."/>
            <person name="Alonso J."/>
            <person name="Altafi H."/>
            <person name="Araujo R."/>
            <person name="Bowman C.L."/>
            <person name="Brooks S.Y."/>
            <person name="Buehler E."/>
            <person name="Chan A."/>
            <person name="Chao Q."/>
            <person name="Chen H."/>
            <person name="Cheuk R.F."/>
            <person name="Chin C.W."/>
            <person name="Chung M.K."/>
            <person name="Conn L."/>
            <person name="Conway A.B."/>
            <person name="Conway A.R."/>
            <person name="Creasy T.H."/>
            <person name="Dewar K."/>
            <person name="Dunn P."/>
            <person name="Etgu P."/>
            <person name="Feldblyum T.V."/>
            <person name="Feng J.-D."/>
            <person name="Fong B."/>
            <person name="Fujii C.Y."/>
            <person name="Gill J.E."/>
            <person name="Goldsmith A.D."/>
            <person name="Haas B."/>
            <person name="Hansen N.F."/>
            <person name="Hughes B."/>
            <person name="Huizar L."/>
            <person name="Hunter J.L."/>
            <person name="Jenkins J."/>
            <person name="Johnson-Hopson C."/>
            <person name="Khan S."/>
            <person name="Khaykin E."/>
            <person name="Kim C.J."/>
            <person name="Koo H.L."/>
            <person name="Kremenetskaia I."/>
            <person name="Kurtz D.B."/>
            <person name="Kwan A."/>
            <person name="Lam B."/>
            <person name="Langin-Hooper S."/>
            <person name="Lee A."/>
            <person name="Lee J.M."/>
            <person name="Lenz C.A."/>
            <person name="Li J.H."/>
            <person name="Li Y.-P."/>
            <person name="Lin X."/>
            <person name="Liu S.X."/>
            <person name="Liu Z.A."/>
            <person name="Luros J.S."/>
            <person name="Maiti R."/>
            <person name="Marziali A."/>
            <person name="Militscher J."/>
            <person name="Miranda M."/>
            <person name="Nguyen M."/>
            <person name="Nierman W.C."/>
            <person name="Osborne B.I."/>
            <person name="Pai G."/>
            <person name="Peterson J."/>
            <person name="Pham P.K."/>
            <person name="Rizzo M."/>
            <person name="Rooney T."/>
            <person name="Rowley D."/>
            <person name="Sakano H."/>
            <person name="Salzberg S.L."/>
            <person name="Schwartz J.R."/>
            <person name="Shinn P."/>
            <person name="Southwick A.M."/>
            <person name="Sun H."/>
            <person name="Tallon L.J."/>
            <person name="Tambunga G."/>
            <person name="Toriumi M.J."/>
            <person name="Town C.D."/>
            <person name="Utterback T."/>
            <person name="Van Aken S."/>
            <person name="Vaysberg M."/>
            <person name="Vysotskaia V.S."/>
            <person name="Walker M."/>
            <person name="Wu D."/>
            <person name="Yu G."/>
            <person name="Fraser C.M."/>
            <person name="Venter J.C."/>
            <person name="Davis R.W."/>
        </authorList>
    </citation>
    <scope>NUCLEOTIDE SEQUENCE [LARGE SCALE GENOMIC DNA]</scope>
    <source>
        <strain>cv. Columbia</strain>
    </source>
</reference>
<reference key="2">
    <citation type="journal article" date="2017" name="Plant J.">
        <title>Araport11: a complete reannotation of the Arabidopsis thaliana reference genome.</title>
        <authorList>
            <person name="Cheng C.Y."/>
            <person name="Krishnakumar V."/>
            <person name="Chan A.P."/>
            <person name="Thibaud-Nissen F."/>
            <person name="Schobel S."/>
            <person name="Town C.D."/>
        </authorList>
    </citation>
    <scope>GENOME REANNOTATION</scope>
    <source>
        <strain>cv. Columbia</strain>
    </source>
</reference>
<reference key="3">
    <citation type="journal article" date="2002" name="Science">
        <title>Functional annotation of a full-length Arabidopsis cDNA collection.</title>
        <authorList>
            <person name="Seki M."/>
            <person name="Narusaka M."/>
            <person name="Kamiya A."/>
            <person name="Ishida J."/>
            <person name="Satou M."/>
            <person name="Sakurai T."/>
            <person name="Nakajima M."/>
            <person name="Enju A."/>
            <person name="Akiyama K."/>
            <person name="Oono Y."/>
            <person name="Muramatsu M."/>
            <person name="Hayashizaki Y."/>
            <person name="Kawai J."/>
            <person name="Carninci P."/>
            <person name="Itoh M."/>
            <person name="Ishii Y."/>
            <person name="Arakawa T."/>
            <person name="Shibata K."/>
            <person name="Shinagawa A."/>
            <person name="Shinozaki K."/>
        </authorList>
    </citation>
    <scope>NUCLEOTIDE SEQUENCE [LARGE SCALE MRNA]</scope>
    <source>
        <strain>cv. Columbia</strain>
    </source>
</reference>
<reference key="4">
    <citation type="journal article" date="2003" name="Science">
        <title>Empirical analysis of transcriptional activity in the Arabidopsis genome.</title>
        <authorList>
            <person name="Yamada K."/>
            <person name="Lim J."/>
            <person name="Dale J.M."/>
            <person name="Chen H."/>
            <person name="Shinn P."/>
            <person name="Palm C.J."/>
            <person name="Southwick A.M."/>
            <person name="Wu H.C."/>
            <person name="Kim C.J."/>
            <person name="Nguyen M."/>
            <person name="Pham P.K."/>
            <person name="Cheuk R.F."/>
            <person name="Karlin-Newmann G."/>
            <person name="Liu S.X."/>
            <person name="Lam B."/>
            <person name="Sakano H."/>
            <person name="Wu T."/>
            <person name="Yu G."/>
            <person name="Miranda M."/>
            <person name="Quach H.L."/>
            <person name="Tripp M."/>
            <person name="Chang C.H."/>
            <person name="Lee J.M."/>
            <person name="Toriumi M.J."/>
            <person name="Chan M.M."/>
            <person name="Tang C.C."/>
            <person name="Onodera C.S."/>
            <person name="Deng J.M."/>
            <person name="Akiyama K."/>
            <person name="Ansari Y."/>
            <person name="Arakawa T."/>
            <person name="Banh J."/>
            <person name="Banno F."/>
            <person name="Bowser L."/>
            <person name="Brooks S.Y."/>
            <person name="Carninci P."/>
            <person name="Chao Q."/>
            <person name="Choy N."/>
            <person name="Enju A."/>
            <person name="Goldsmith A.D."/>
            <person name="Gurjal M."/>
            <person name="Hansen N.F."/>
            <person name="Hayashizaki Y."/>
            <person name="Johnson-Hopson C."/>
            <person name="Hsuan V.W."/>
            <person name="Iida K."/>
            <person name="Karnes M."/>
            <person name="Khan S."/>
            <person name="Koesema E."/>
            <person name="Ishida J."/>
            <person name="Jiang P.X."/>
            <person name="Jones T."/>
            <person name="Kawai J."/>
            <person name="Kamiya A."/>
            <person name="Meyers C."/>
            <person name="Nakajima M."/>
            <person name="Narusaka M."/>
            <person name="Seki M."/>
            <person name="Sakurai T."/>
            <person name="Satou M."/>
            <person name="Tamse R."/>
            <person name="Vaysberg M."/>
            <person name="Wallender E.K."/>
            <person name="Wong C."/>
            <person name="Yamamura Y."/>
            <person name="Yuan S."/>
            <person name="Shinozaki K."/>
            <person name="Davis R.W."/>
            <person name="Theologis A."/>
            <person name="Ecker J.R."/>
        </authorList>
    </citation>
    <scope>NUCLEOTIDE SEQUENCE [LARGE SCALE MRNA]</scope>
    <source>
        <strain>cv. Columbia</strain>
    </source>
</reference>
<reference key="5">
    <citation type="journal article" date="2014" name="Plant Physiol.">
        <title>The evolutionary conserved oil body associated protein OBAP1 participates in the regulation of oil body size.</title>
        <authorList>
            <person name="Lopez-Ribera I."/>
            <person name="La Paz J.L."/>
            <person name="Repiso C."/>
            <person name="Garcia N."/>
            <person name="Miquel M."/>
            <person name="Hernandez M.L."/>
            <person name="Martinez-Rivas J.M."/>
            <person name="Vicient C.M."/>
        </authorList>
    </citation>
    <scope>GENE FAMILY</scope>
    <scope>NOMENCLATURE</scope>
</reference>